<dbReference type="EC" id="3.6.5.3" evidence="2"/>
<dbReference type="EMBL" id="CP000308">
    <property type="protein sequence ID" value="ABG15231.1"/>
    <property type="molecule type" value="Genomic_DNA"/>
</dbReference>
<dbReference type="SMR" id="Q1C2U1"/>
<dbReference type="KEGG" id="ypa:YPA_3269"/>
<dbReference type="Proteomes" id="UP000001971">
    <property type="component" value="Chromosome"/>
</dbReference>
<dbReference type="GO" id="GO:0005829">
    <property type="term" value="C:cytosol"/>
    <property type="evidence" value="ECO:0007669"/>
    <property type="project" value="TreeGrafter"/>
</dbReference>
<dbReference type="GO" id="GO:0005525">
    <property type="term" value="F:GTP binding"/>
    <property type="evidence" value="ECO:0007669"/>
    <property type="project" value="UniProtKB-UniRule"/>
</dbReference>
<dbReference type="GO" id="GO:0003924">
    <property type="term" value="F:GTPase activity"/>
    <property type="evidence" value="ECO:0007669"/>
    <property type="project" value="InterPro"/>
</dbReference>
<dbReference type="GO" id="GO:0097216">
    <property type="term" value="F:guanosine tetraphosphate binding"/>
    <property type="evidence" value="ECO:0007669"/>
    <property type="project" value="UniProtKB-ARBA"/>
</dbReference>
<dbReference type="GO" id="GO:0003746">
    <property type="term" value="F:translation elongation factor activity"/>
    <property type="evidence" value="ECO:0007669"/>
    <property type="project" value="UniProtKB-UniRule"/>
</dbReference>
<dbReference type="CDD" id="cd01884">
    <property type="entry name" value="EF_Tu"/>
    <property type="match status" value="1"/>
</dbReference>
<dbReference type="CDD" id="cd03697">
    <property type="entry name" value="EFTU_II"/>
    <property type="match status" value="1"/>
</dbReference>
<dbReference type="CDD" id="cd03707">
    <property type="entry name" value="EFTU_III"/>
    <property type="match status" value="1"/>
</dbReference>
<dbReference type="FunFam" id="2.40.30.10:FF:000001">
    <property type="entry name" value="Elongation factor Tu"/>
    <property type="match status" value="1"/>
</dbReference>
<dbReference type="FunFam" id="3.40.50.300:FF:000003">
    <property type="entry name" value="Elongation factor Tu"/>
    <property type="match status" value="1"/>
</dbReference>
<dbReference type="Gene3D" id="3.40.50.300">
    <property type="entry name" value="P-loop containing nucleotide triphosphate hydrolases"/>
    <property type="match status" value="1"/>
</dbReference>
<dbReference type="Gene3D" id="2.40.30.10">
    <property type="entry name" value="Translation factors"/>
    <property type="match status" value="2"/>
</dbReference>
<dbReference type="HAMAP" id="MF_00118_B">
    <property type="entry name" value="EF_Tu_B"/>
    <property type="match status" value="1"/>
</dbReference>
<dbReference type="InterPro" id="IPR041709">
    <property type="entry name" value="EF-Tu_GTP-bd"/>
</dbReference>
<dbReference type="InterPro" id="IPR050055">
    <property type="entry name" value="EF-Tu_GTPase"/>
</dbReference>
<dbReference type="InterPro" id="IPR004161">
    <property type="entry name" value="EFTu-like_2"/>
</dbReference>
<dbReference type="InterPro" id="IPR033720">
    <property type="entry name" value="EFTU_2"/>
</dbReference>
<dbReference type="InterPro" id="IPR031157">
    <property type="entry name" value="G_TR_CS"/>
</dbReference>
<dbReference type="InterPro" id="IPR027417">
    <property type="entry name" value="P-loop_NTPase"/>
</dbReference>
<dbReference type="InterPro" id="IPR005225">
    <property type="entry name" value="Small_GTP-bd"/>
</dbReference>
<dbReference type="InterPro" id="IPR000795">
    <property type="entry name" value="T_Tr_GTP-bd_dom"/>
</dbReference>
<dbReference type="InterPro" id="IPR009000">
    <property type="entry name" value="Transl_B-barrel_sf"/>
</dbReference>
<dbReference type="InterPro" id="IPR009001">
    <property type="entry name" value="Transl_elong_EF1A/Init_IF2_C"/>
</dbReference>
<dbReference type="InterPro" id="IPR004541">
    <property type="entry name" value="Transl_elong_EFTu/EF1A_bac/org"/>
</dbReference>
<dbReference type="InterPro" id="IPR004160">
    <property type="entry name" value="Transl_elong_EFTu/EF1A_C"/>
</dbReference>
<dbReference type="NCBIfam" id="TIGR00485">
    <property type="entry name" value="EF-Tu"/>
    <property type="match status" value="1"/>
</dbReference>
<dbReference type="NCBIfam" id="NF000766">
    <property type="entry name" value="PRK00049.1"/>
    <property type="match status" value="1"/>
</dbReference>
<dbReference type="NCBIfam" id="NF009372">
    <property type="entry name" value="PRK12735.1"/>
    <property type="match status" value="1"/>
</dbReference>
<dbReference type="NCBIfam" id="NF009373">
    <property type="entry name" value="PRK12736.1"/>
    <property type="match status" value="1"/>
</dbReference>
<dbReference type="NCBIfam" id="TIGR00231">
    <property type="entry name" value="small_GTP"/>
    <property type="match status" value="1"/>
</dbReference>
<dbReference type="PANTHER" id="PTHR43721:SF22">
    <property type="entry name" value="ELONGATION FACTOR TU, MITOCHONDRIAL"/>
    <property type="match status" value="1"/>
</dbReference>
<dbReference type="PANTHER" id="PTHR43721">
    <property type="entry name" value="ELONGATION FACTOR TU-RELATED"/>
    <property type="match status" value="1"/>
</dbReference>
<dbReference type="Pfam" id="PF00009">
    <property type="entry name" value="GTP_EFTU"/>
    <property type="match status" value="1"/>
</dbReference>
<dbReference type="Pfam" id="PF03144">
    <property type="entry name" value="GTP_EFTU_D2"/>
    <property type="match status" value="1"/>
</dbReference>
<dbReference type="Pfam" id="PF03143">
    <property type="entry name" value="GTP_EFTU_D3"/>
    <property type="match status" value="1"/>
</dbReference>
<dbReference type="PRINTS" id="PR00315">
    <property type="entry name" value="ELONGATNFCT"/>
</dbReference>
<dbReference type="SUPFAM" id="SSF50465">
    <property type="entry name" value="EF-Tu/eEF-1alpha/eIF2-gamma C-terminal domain"/>
    <property type="match status" value="1"/>
</dbReference>
<dbReference type="SUPFAM" id="SSF52540">
    <property type="entry name" value="P-loop containing nucleoside triphosphate hydrolases"/>
    <property type="match status" value="1"/>
</dbReference>
<dbReference type="SUPFAM" id="SSF50447">
    <property type="entry name" value="Translation proteins"/>
    <property type="match status" value="1"/>
</dbReference>
<dbReference type="PROSITE" id="PS00301">
    <property type="entry name" value="G_TR_1"/>
    <property type="match status" value="1"/>
</dbReference>
<dbReference type="PROSITE" id="PS51722">
    <property type="entry name" value="G_TR_2"/>
    <property type="match status" value="1"/>
</dbReference>
<sequence>MSKEKFERTKPHVNVGTIGHVDHGKTTLTAAITTVLAKTYGGSARAFDQIDNAPEEKARGITINTSHVEYDTPARHYAHVDCPGHADYVKNMITGAAQMDGAILVVAATDGPMPQTREHILLGRQVGVPYIIVFMNKCDMVDDEELLELVEMEVRELLSAYDFPGDDLPVVRGSALKALEGEAEWEAKIIELAGYLDSYIPEPERAIDKPFLLPIEDVFSISGRGTVVTGRVERGIVKVGEEVEIVGIKDTVKSTCTGVEMFRKLLDEGRAGENVGVLLRGIKREDIERGQVLAKPGSIKPHTTFESEVYILSKDEGGRHTPFFKGYRPQFYFRTTDVTGTIELPEGVEMVMPGDNINMIVTLIHPIAMDDGLRFAIREGGRTVGAGVVAKVIA</sequence>
<reference key="1">
    <citation type="journal article" date="2006" name="J. Bacteriol.">
        <title>Complete genome sequence of Yersinia pestis strains Antiqua and Nepal516: evidence of gene reduction in an emerging pathogen.</title>
        <authorList>
            <person name="Chain P.S.G."/>
            <person name="Hu P."/>
            <person name="Malfatti S.A."/>
            <person name="Radnedge L."/>
            <person name="Larimer F."/>
            <person name="Vergez L.M."/>
            <person name="Worsham P."/>
            <person name="Chu M.C."/>
            <person name="Andersen G.L."/>
        </authorList>
    </citation>
    <scope>NUCLEOTIDE SEQUENCE [LARGE SCALE GENOMIC DNA]</scope>
    <source>
        <strain>Antiqua</strain>
    </source>
</reference>
<proteinExistence type="inferred from homology"/>
<comment type="function">
    <text evidence="2">GTP hydrolase that promotes the GTP-dependent binding of aminoacyl-tRNA to the A-site of ribosomes during protein biosynthesis.</text>
</comment>
<comment type="catalytic activity">
    <reaction evidence="2">
        <text>GTP + H2O = GDP + phosphate + H(+)</text>
        <dbReference type="Rhea" id="RHEA:19669"/>
        <dbReference type="ChEBI" id="CHEBI:15377"/>
        <dbReference type="ChEBI" id="CHEBI:15378"/>
        <dbReference type="ChEBI" id="CHEBI:37565"/>
        <dbReference type="ChEBI" id="CHEBI:43474"/>
        <dbReference type="ChEBI" id="CHEBI:58189"/>
        <dbReference type="EC" id="3.6.5.3"/>
    </reaction>
    <physiologicalReaction direction="left-to-right" evidence="2">
        <dbReference type="Rhea" id="RHEA:19670"/>
    </physiologicalReaction>
</comment>
<comment type="subunit">
    <text evidence="2">Monomer.</text>
</comment>
<comment type="subcellular location">
    <subcellularLocation>
        <location evidence="2">Cytoplasm</location>
    </subcellularLocation>
</comment>
<comment type="similarity">
    <text evidence="2">Belongs to the TRAFAC class translation factor GTPase superfamily. Classic translation factor GTPase family. EF-Tu/EF-1A subfamily.</text>
</comment>
<evidence type="ECO:0000250" key="1"/>
<evidence type="ECO:0000255" key="2">
    <source>
        <dbReference type="HAMAP-Rule" id="MF_00118"/>
    </source>
</evidence>
<accession>Q1C2U1</accession>
<protein>
    <recommendedName>
        <fullName evidence="2">Elongation factor Tu 1</fullName>
        <shortName evidence="2">EF-Tu 1</shortName>
        <ecNumber evidence="2">3.6.5.3</ecNumber>
    </recommendedName>
</protein>
<organism>
    <name type="scientific">Yersinia pestis bv. Antiqua (strain Antiqua)</name>
    <dbReference type="NCBI Taxonomy" id="360102"/>
    <lineage>
        <taxon>Bacteria</taxon>
        <taxon>Pseudomonadati</taxon>
        <taxon>Pseudomonadota</taxon>
        <taxon>Gammaproteobacteria</taxon>
        <taxon>Enterobacterales</taxon>
        <taxon>Yersiniaceae</taxon>
        <taxon>Yersinia</taxon>
    </lineage>
</organism>
<name>EFTU1_YERPA</name>
<gene>
    <name evidence="2" type="primary">tuf1</name>
    <name type="ordered locus">YPA_3269</name>
</gene>
<keyword id="KW-0963">Cytoplasm</keyword>
<keyword id="KW-0251">Elongation factor</keyword>
<keyword id="KW-0342">GTP-binding</keyword>
<keyword id="KW-0378">Hydrolase</keyword>
<keyword id="KW-0460">Magnesium</keyword>
<keyword id="KW-0479">Metal-binding</keyword>
<keyword id="KW-0547">Nucleotide-binding</keyword>
<keyword id="KW-0648">Protein biosynthesis</keyword>
<feature type="chain" id="PRO_0000337584" description="Elongation factor Tu 1">
    <location>
        <begin position="1"/>
        <end position="394"/>
    </location>
</feature>
<feature type="domain" description="tr-type G">
    <location>
        <begin position="10"/>
        <end position="204"/>
    </location>
</feature>
<feature type="region of interest" description="G1" evidence="1">
    <location>
        <begin position="19"/>
        <end position="26"/>
    </location>
</feature>
<feature type="region of interest" description="G2" evidence="1">
    <location>
        <begin position="60"/>
        <end position="64"/>
    </location>
</feature>
<feature type="region of interest" description="G3" evidence="1">
    <location>
        <begin position="81"/>
        <end position="84"/>
    </location>
</feature>
<feature type="region of interest" description="G4" evidence="1">
    <location>
        <begin position="136"/>
        <end position="139"/>
    </location>
</feature>
<feature type="region of interest" description="G5" evidence="1">
    <location>
        <begin position="174"/>
        <end position="176"/>
    </location>
</feature>
<feature type="binding site" evidence="2">
    <location>
        <begin position="19"/>
        <end position="26"/>
    </location>
    <ligand>
        <name>GTP</name>
        <dbReference type="ChEBI" id="CHEBI:37565"/>
    </ligand>
</feature>
<feature type="binding site" evidence="2">
    <location>
        <position position="26"/>
    </location>
    <ligand>
        <name>Mg(2+)</name>
        <dbReference type="ChEBI" id="CHEBI:18420"/>
    </ligand>
</feature>
<feature type="binding site" evidence="2">
    <location>
        <begin position="81"/>
        <end position="85"/>
    </location>
    <ligand>
        <name>GTP</name>
        <dbReference type="ChEBI" id="CHEBI:37565"/>
    </ligand>
</feature>
<feature type="binding site" evidence="2">
    <location>
        <begin position="136"/>
        <end position="139"/>
    </location>
    <ligand>
        <name>GTP</name>
        <dbReference type="ChEBI" id="CHEBI:37565"/>
    </ligand>
</feature>